<protein>
    <recommendedName>
        <fullName evidence="12">Inositol 1,4,5-triphosphate receptor associated 2</fullName>
    </recommendedName>
    <alternativeName>
        <fullName>Lymphoid-restricted membrane protein</fullName>
    </alternativeName>
    <alternativeName>
        <fullName>Protein Jaw1</fullName>
    </alternativeName>
    <component>
        <recommendedName>
            <fullName>Processed inositol 1,4,5-triphosphate receptor associated 2</fullName>
        </recommendedName>
    </component>
</protein>
<feature type="chain" id="PRO_0000084484" description="Inositol 1,4,5-triphosphate receptor associated 2">
    <location>
        <begin position="1"/>
        <end position="539"/>
    </location>
</feature>
<feature type="chain" id="PRO_0000296245" description="Processed inositol 1,4,5-triphosphate receptor associated 2">
    <location>
        <begin position="1"/>
        <end status="unknown"/>
    </location>
</feature>
<feature type="topological domain" description="Cytoplasmic" evidence="3">
    <location>
        <begin position="1"/>
        <end position="479"/>
    </location>
</feature>
<feature type="transmembrane region" description="Helical; Anchor for type IV membrane protein" evidence="3">
    <location>
        <begin position="480"/>
        <end position="500"/>
    </location>
</feature>
<feature type="topological domain" description="Lumenal" evidence="3">
    <location>
        <begin position="501"/>
        <end position="539"/>
    </location>
</feature>
<feature type="region of interest" description="Disordered" evidence="4">
    <location>
        <begin position="1"/>
        <end position="21"/>
    </location>
</feature>
<feature type="region of interest" description="Disordered" evidence="4">
    <location>
        <begin position="69"/>
        <end position="98"/>
    </location>
</feature>
<feature type="region of interest" description="Disordered" evidence="4">
    <location>
        <begin position="147"/>
        <end position="171"/>
    </location>
</feature>
<feature type="region of interest" description="Disordered" evidence="4">
    <location>
        <begin position="334"/>
        <end position="353"/>
    </location>
</feature>
<feature type="region of interest" description="Disordered" evidence="4">
    <location>
        <begin position="418"/>
        <end position="449"/>
    </location>
</feature>
<feature type="coiled-coil region" evidence="3">
    <location>
        <begin position="298"/>
        <end position="326"/>
    </location>
</feature>
<feature type="compositionally biased region" description="Low complexity" evidence="4">
    <location>
        <begin position="74"/>
        <end position="92"/>
    </location>
</feature>
<feature type="compositionally biased region" description="Basic and acidic residues" evidence="4">
    <location>
        <begin position="435"/>
        <end position="449"/>
    </location>
</feature>
<feature type="modified residue" description="Phosphothreonine" evidence="1">
    <location>
        <position position="78"/>
    </location>
</feature>
<feature type="modified residue" description="Phosphoserine" evidence="1">
    <location>
        <position position="347"/>
    </location>
</feature>
<feature type="modified residue" description="Phosphoserine" evidence="1">
    <location>
        <position position="354"/>
    </location>
</feature>
<feature type="modified residue" description="Phosphoserine" evidence="15">
    <location>
        <position position="408"/>
    </location>
</feature>
<feature type="mutagenesis site" description="Results in cytosolic distribution." evidence="9">
    <location>
        <begin position="480"/>
        <end position="539"/>
    </location>
</feature>
<feature type="sequence conflict" description="In Ref. 3; AAH52909." evidence="12" ref="3">
    <original>D</original>
    <variation>G</variation>
    <location>
        <position position="31"/>
    </location>
</feature>
<feature type="sequence conflict" description="In Ref. 3; AAH52909." evidence="12" ref="3">
    <original>GHF</original>
    <variation>DHL</variation>
    <location>
        <begin position="56"/>
        <end position="58"/>
    </location>
</feature>
<feature type="sequence conflict" description="In Ref. 3; AAH52909." evidence="12" ref="3">
    <original>E</original>
    <variation>G</variation>
    <location>
        <position position="195"/>
    </location>
</feature>
<feature type="sequence conflict" description="In Ref. 3; AAH52909." evidence="12" ref="3">
    <original>R</original>
    <variation>G</variation>
    <location>
        <position position="438"/>
    </location>
</feature>
<feature type="sequence conflict" description="In Ref. 3; AAH52909." evidence="12" ref="3">
    <original>G</original>
    <variation>V</variation>
    <location>
        <position position="532"/>
    </location>
</feature>
<feature type="sequence conflict" description="In Ref. 3; AAH52909." evidence="12" ref="3">
    <original>P</original>
    <variation>L</variation>
    <location>
        <position position="537"/>
    </location>
</feature>
<evidence type="ECO:0000250" key="1">
    <source>
        <dbReference type="UniProtKB" id="Q12912"/>
    </source>
</evidence>
<evidence type="ECO:0000250" key="2">
    <source>
        <dbReference type="UniProtKB" id="Q5RHB5"/>
    </source>
</evidence>
<evidence type="ECO:0000255" key="3"/>
<evidence type="ECO:0000256" key="4">
    <source>
        <dbReference type="SAM" id="MobiDB-lite"/>
    </source>
</evidence>
<evidence type="ECO:0000269" key="5">
    <source>
    </source>
</evidence>
<evidence type="ECO:0000269" key="6">
    <source>
    </source>
</evidence>
<evidence type="ECO:0000269" key="7">
    <source>
    </source>
</evidence>
<evidence type="ECO:0000269" key="8">
    <source>
    </source>
</evidence>
<evidence type="ECO:0000269" key="9">
    <source>
    </source>
</evidence>
<evidence type="ECO:0000269" key="10">
    <source>
    </source>
</evidence>
<evidence type="ECO:0000303" key="11">
    <source>
    </source>
</evidence>
<evidence type="ECO:0000305" key="12"/>
<evidence type="ECO:0000305" key="13">
    <source>
    </source>
</evidence>
<evidence type="ECO:0000312" key="14">
    <source>
        <dbReference type="MGI" id="MGI:108424"/>
    </source>
</evidence>
<evidence type="ECO:0007744" key="15">
    <source>
    </source>
</evidence>
<name>IRAG2_MOUSE</name>
<organism>
    <name type="scientific">Mus musculus</name>
    <name type="common">Mouse</name>
    <dbReference type="NCBI Taxonomy" id="10090"/>
    <lineage>
        <taxon>Eukaryota</taxon>
        <taxon>Metazoa</taxon>
        <taxon>Chordata</taxon>
        <taxon>Craniata</taxon>
        <taxon>Vertebrata</taxon>
        <taxon>Euteleostomi</taxon>
        <taxon>Mammalia</taxon>
        <taxon>Eutheria</taxon>
        <taxon>Euarchontoglires</taxon>
        <taxon>Glires</taxon>
        <taxon>Rodentia</taxon>
        <taxon>Myomorpha</taxon>
        <taxon>Muroidea</taxon>
        <taxon>Muridae</taxon>
        <taxon>Murinae</taxon>
        <taxon>Mus</taxon>
        <taxon>Mus</taxon>
    </lineage>
</organism>
<sequence length="539" mass="59588">MLCVKGPPEQEPEDGALDVTRGCQCPLPTEDSILGQELLDCTRMNEDQSTDENGAGHFYSESPSQLREYLTQPSSEQTSSSESTVTSSESGSDILHMASGDLDCKPLCEKEEEARAASAMQGTSLAPAAYGDYTSVGVAKAASQLEAGEELRTTENGGKGSAPGETEISMPPKASVKLVNFQQSENTSANEKEVEAEFLRLSLGLKCDWFTLEKRVKLEERSRDLAEENLKKEITNCLKLLESLTPLCEEDNQAQEIVKKLEKSIVLLSQCTARVASRAEMLGAINQESRVSRAVEVMIQHVENLKRMYAKEHAELEDLKQALLQNDRSFNSLPDEDDCQIKKRSSSLNSKPSSLRRVTIASLPRNLGNVGLVSGMENNDRFSRRSSSWRILGTKQGEHRPSLHRFISTYSWADAEDERSDVKARDAPEPQGEEAVERTRKPSLSERRSSTLAWDRGTICSSVASWVTHLQASFRRANRALWLTGLIIILIAALMSFLTGQLFQTAVEAAPTQEGDSWLSLEHILWPFTRLGHDGPPPV</sequence>
<gene>
    <name type="primary">Irag2</name>
    <name evidence="11" type="synonym">Jaw1</name>
    <name evidence="14" type="synonym">Lrmp</name>
</gene>
<accession>Q60664</accession>
<accession>Q7TMU8</accession>
<dbReference type="EMBL" id="U10484">
    <property type="protein sequence ID" value="AAA21603.1"/>
    <property type="molecule type" value="mRNA"/>
</dbReference>
<dbReference type="EMBL" id="AY753324">
    <property type="protein sequence ID" value="AAV31716.1"/>
    <property type="molecule type" value="mRNA"/>
</dbReference>
<dbReference type="EMBL" id="BC052909">
    <property type="protein sequence ID" value="AAH52909.1"/>
    <property type="molecule type" value="mRNA"/>
</dbReference>
<dbReference type="PIR" id="I49065">
    <property type="entry name" value="I49065"/>
</dbReference>
<dbReference type="RefSeq" id="NP_001268909.1">
    <property type="nucleotide sequence ID" value="NM_001281980.1"/>
</dbReference>
<dbReference type="SMR" id="Q60664"/>
<dbReference type="BioGRID" id="201200">
    <property type="interactions" value="4"/>
</dbReference>
<dbReference type="FunCoup" id="Q60664">
    <property type="interactions" value="314"/>
</dbReference>
<dbReference type="IntAct" id="Q60664">
    <property type="interactions" value="4"/>
</dbReference>
<dbReference type="STRING" id="10090.ENSMUSP00000032396"/>
<dbReference type="GlyGen" id="Q60664">
    <property type="glycosylation" value="1 site, 1 O-linked glycan (1 site)"/>
</dbReference>
<dbReference type="iPTMnet" id="Q60664"/>
<dbReference type="PhosphoSitePlus" id="Q60664"/>
<dbReference type="jPOST" id="Q60664"/>
<dbReference type="PaxDb" id="10090-ENSMUSP00000032396"/>
<dbReference type="ProteomicsDB" id="292110"/>
<dbReference type="DNASU" id="16970"/>
<dbReference type="GeneID" id="16970"/>
<dbReference type="KEGG" id="mmu:16970"/>
<dbReference type="AGR" id="MGI:108424"/>
<dbReference type="CTD" id="4033"/>
<dbReference type="MGI" id="MGI:108424">
    <property type="gene designation" value="Irag2"/>
</dbReference>
<dbReference type="eggNOG" id="ENOG502QTH4">
    <property type="taxonomic scope" value="Eukaryota"/>
</dbReference>
<dbReference type="InParanoid" id="Q60664"/>
<dbReference type="OrthoDB" id="10062605at2759"/>
<dbReference type="PhylomeDB" id="Q60664"/>
<dbReference type="BioGRID-ORCS" id="16970">
    <property type="hits" value="1 hit in 77 CRISPR screens"/>
</dbReference>
<dbReference type="ChiTaRS" id="Lrmp">
    <property type="organism name" value="mouse"/>
</dbReference>
<dbReference type="PRO" id="PR:Q60664"/>
<dbReference type="Proteomes" id="UP000000589">
    <property type="component" value="Unplaced"/>
</dbReference>
<dbReference type="RNAct" id="Q60664">
    <property type="molecule type" value="protein"/>
</dbReference>
<dbReference type="GO" id="GO:0005813">
    <property type="term" value="C:centrosome"/>
    <property type="evidence" value="ECO:0007669"/>
    <property type="project" value="UniProtKB-SubCell"/>
</dbReference>
<dbReference type="GO" id="GO:0005694">
    <property type="term" value="C:chromosome"/>
    <property type="evidence" value="ECO:0007669"/>
    <property type="project" value="UniProtKB-SubCell"/>
</dbReference>
<dbReference type="GO" id="GO:0005783">
    <property type="term" value="C:endoplasmic reticulum"/>
    <property type="evidence" value="ECO:0000314"/>
    <property type="project" value="MGI"/>
</dbReference>
<dbReference type="GO" id="GO:0005789">
    <property type="term" value="C:endoplasmic reticulum membrane"/>
    <property type="evidence" value="ECO:0000314"/>
    <property type="project" value="UniProtKB"/>
</dbReference>
<dbReference type="GO" id="GO:0005635">
    <property type="term" value="C:nuclear envelope"/>
    <property type="evidence" value="ECO:0000314"/>
    <property type="project" value="UniProtKB"/>
</dbReference>
<dbReference type="GO" id="GO:0000922">
    <property type="term" value="C:spindle pole"/>
    <property type="evidence" value="ECO:0007669"/>
    <property type="project" value="UniProtKB-SubCell"/>
</dbReference>
<dbReference type="GO" id="GO:0008017">
    <property type="term" value="F:microtubule binding"/>
    <property type="evidence" value="ECO:0000314"/>
    <property type="project" value="UniProtKB"/>
</dbReference>
<dbReference type="GO" id="GO:0002376">
    <property type="term" value="P:immune system process"/>
    <property type="evidence" value="ECO:0007669"/>
    <property type="project" value="UniProtKB-KW"/>
</dbReference>
<dbReference type="GO" id="GO:0006997">
    <property type="term" value="P:nucleus organization"/>
    <property type="evidence" value="ECO:0000315"/>
    <property type="project" value="UniProtKB"/>
</dbReference>
<dbReference type="GO" id="GO:0007338">
    <property type="term" value="P:single fertilization"/>
    <property type="evidence" value="ECO:0007669"/>
    <property type="project" value="UniProtKB-KW"/>
</dbReference>
<dbReference type="InterPro" id="IPR008677">
    <property type="entry name" value="MRVI1"/>
</dbReference>
<dbReference type="PANTHER" id="PTHR15352:SF3">
    <property type="entry name" value="INOSITOL 1,4,5-TRIPHOSPHATE RECEPTOR ASSOCIATED 2"/>
    <property type="match status" value="1"/>
</dbReference>
<dbReference type="PANTHER" id="PTHR15352">
    <property type="entry name" value="LYMPHOID-RESTRICTED MEMBRANE PROTEIN, JAW1"/>
    <property type="match status" value="1"/>
</dbReference>
<dbReference type="Pfam" id="PF05781">
    <property type="entry name" value="MRVI1"/>
    <property type="match status" value="1"/>
</dbReference>
<comment type="function">
    <text evidence="6 7 10">Plays a role in the delivery of peptides to major histocompatibility complex (MHC) class I molecules; this occurs in a transporter associated with antigen processing (TAP)-independent manner. May play a role in taste signal transduction via ITPR3. May play a role during fertilization in pronucleus congression and fusion (PubMed:9314557). Plays a role in maintaining nuclear shape, maybe as a component of the LINC complex and through interaction with microtubules (PubMed:29878215). Plays a role in the regulation of cellular excitability by regulating the hyperpolarization-activated cyclic nucleotide-gated HCN4 channel activity (PubMed:32647060).</text>
</comment>
<comment type="subunit">
    <text evidence="5 6 7">Interacts (via coiled-coil domain) with ITPR3 (PubMed:20071408). Interacts with SUN1 and SUN2 (PubMed:29878215). Interacts with microtubules (PubMed:29878215). Interacts with HCN4; regulates HCN4 channel activity (PubMed:32647060).</text>
</comment>
<comment type="subcellular location">
    <molecule>Processed inositol 1,4,5-triphosphate receptor associated 2</molecule>
    <subcellularLocation>
        <location evidence="9">Cytoplasm</location>
    </subcellularLocation>
</comment>
<comment type="subcellular location">
    <subcellularLocation>
        <location evidence="5">Endoplasmic reticulum membrane</location>
        <topology evidence="3">Single-pass type IV membrane protein</topology>
    </subcellularLocation>
    <subcellularLocation>
        <location evidence="13">Nucleus envelope</location>
    </subcellularLocation>
    <subcellularLocation>
        <location evidence="2">Cytoplasm</location>
        <location evidence="2">Cytoskeleton</location>
        <location evidence="2">Microtubule organizing center</location>
        <location evidence="2">Centrosome</location>
    </subcellularLocation>
    <subcellularLocation>
        <location evidence="2">Cytoplasm</location>
        <location evidence="2">Cytoskeleton</location>
        <location evidence="2">Spindle pole</location>
    </subcellularLocation>
    <subcellularLocation>
        <location evidence="2">Chromosome</location>
    </subcellularLocation>
    <text evidence="5">Colocalized with ITPR3 on the endoplasmic reticulum membrane.</text>
</comment>
<comment type="tissue specificity">
    <text evidence="5 8">Spleen and thymus. Expressed at high levels in pre B-cells, mature B-cells and pre T-cells. Expressed at low levels in mature T-cells and plasma B-cells. Expressed in circumvallate (CV), foliate (FL) and fungiform (FF) taste papillae cells of the tongue epithelium.</text>
</comment>
<comment type="PTM">
    <text evidence="9 10">The removal of the C-terminal lumenal domain occurs by proteolytic processing.</text>
</comment>
<comment type="similarity">
    <text evidence="12">Belongs to the IRAG2 family.</text>
</comment>
<reference key="1">
    <citation type="journal article" date="1994" name="J. Immunol.">
        <title>Jaw1, a lymphoid-restricted membrane protein localized to the endoplasmic reticulum.</title>
        <authorList>
            <person name="Behrens T.W."/>
            <person name="Jagadeesh J."/>
            <person name="Scherle P."/>
            <person name="Kearns G."/>
            <person name="Yewdell J."/>
            <person name="Staudt L.M."/>
        </authorList>
    </citation>
    <scope>NUCLEOTIDE SEQUENCE [MRNA]</scope>
    <scope>SUBCELLULAR LOCATION</scope>
    <scope>TISSUE SPECIFICITY</scope>
</reference>
<reference key="2">
    <citation type="submission" date="2004-09" db="EMBL/GenBank/DDBJ databases">
        <title>Complex in vitro allelic effects of mouse Pas1 candidate genes in human lung cancer cell lines.</title>
        <authorList>
            <person name="Manenti G."/>
            <person name="Galbiati F."/>
            <person name="Pettinicchio A."/>
            <person name="Dragani T.A."/>
        </authorList>
    </citation>
    <scope>NUCLEOTIDE SEQUENCE [MRNA]</scope>
    <source>
        <strain>A/J</strain>
        <tissue>Lung</tissue>
    </source>
</reference>
<reference key="3">
    <citation type="journal article" date="2004" name="Genome Res.">
        <title>The status, quality, and expansion of the NIH full-length cDNA project: the Mammalian Gene Collection (MGC).</title>
        <authorList>
            <consortium name="The MGC Project Team"/>
        </authorList>
    </citation>
    <scope>NUCLEOTIDE SEQUENCE [LARGE SCALE MRNA]</scope>
    <source>
        <strain>C57BL/6NCr</strain>
        <tissue>Hematopoietic stem cell</tissue>
    </source>
</reference>
<reference key="4">
    <citation type="journal article" date="1996" name="J. Biol. Chem.">
        <title>Carboxyl-terminal targeting and novel post-translational processing of JAW1, a lymphoid protein of the endoplasmic reticulum.</title>
        <authorList>
            <person name="Behrens T.W."/>
            <person name="Kearns G.M."/>
            <person name="Rivard J.J."/>
            <person name="Bernstein H.D."/>
            <person name="Yewdell J.W."/>
            <person name="Staudt L.M."/>
        </authorList>
    </citation>
    <scope>MUTAGENESIS OF 480-ALA--VAL-539</scope>
    <scope>SUBCELLULAR LOCATION</scope>
    <scope>PROTEOLYTIC PROCESSING</scope>
</reference>
<reference key="5">
    <citation type="journal article" date="1997" name="J. Exp. Med.">
        <title>Two novel routes of transporter associated with antigen processing (TAP)-independent major histocompatibility complex class I antigen processing.</title>
        <authorList>
            <person name="Snyder H.L."/>
            <person name="Bacik I."/>
            <person name="Bennink J.R."/>
            <person name="Kearns G."/>
            <person name="Behrens T.W."/>
            <person name="Baechi T."/>
            <person name="Orlowski M."/>
            <person name="Yewdell J.W."/>
        </authorList>
    </citation>
    <scope>FUNCTION</scope>
    <scope>SUBCELLULAR LOCATION</scope>
    <scope>PROTEOLYTIC CLEAVAGE</scope>
</reference>
<reference key="6">
    <citation type="journal article" date="2010" name="Cell">
        <title>A tissue-specific atlas of mouse protein phosphorylation and expression.</title>
        <authorList>
            <person name="Huttlin E.L."/>
            <person name="Jedrychowski M.P."/>
            <person name="Elias J.E."/>
            <person name="Goswami T."/>
            <person name="Rad R."/>
            <person name="Beausoleil S.A."/>
            <person name="Villen J."/>
            <person name="Haas W."/>
            <person name="Sowa M.E."/>
            <person name="Gygi S.P."/>
        </authorList>
    </citation>
    <scope>PHOSPHORYLATION [LARGE SCALE ANALYSIS] AT SER-408</scope>
    <scope>IDENTIFICATION BY MASS SPECTROMETRY [LARGE SCALE ANALYSIS]</scope>
    <source>
        <tissue>Lung</tissue>
        <tissue>Pancreas</tissue>
        <tissue>Spleen</tissue>
    </source>
</reference>
<reference key="7">
    <citation type="journal article" date="2010" name="Chem. Senses">
        <title>Lrmp/Jaw1 is expressed in sweet, bitter, and umami receptor-expressing cells.</title>
        <authorList>
            <person name="Shindo Y."/>
            <person name="Kim M.R."/>
            <person name="Miura H."/>
            <person name="Yuuki T."/>
            <person name="Kanda T."/>
            <person name="Hino A."/>
            <person name="Kusakabe Y."/>
        </authorList>
    </citation>
    <scope>POSSIBLE FUNCTION</scope>
    <scope>INTERACTION WITH ITPR3</scope>
    <scope>SUBCELLULAR LOCATION</scope>
    <scope>TISSUE SPECIFICITY</scope>
</reference>
<reference key="8">
    <citation type="journal article" date="2018" name="J. Biochem.">
        <title>Jaw1/LRMP has a role in maintaining nuclear shape via interaction with SUN proteins.</title>
        <authorList>
            <person name="Kozono T."/>
            <person name="Tadahira K."/>
            <person name="Okumura W."/>
            <person name="Itai N."/>
            <person name="Tamura-Nakano M."/>
            <person name="Dohi T."/>
            <person name="Tonozuka T."/>
            <person name="Nishikawa A."/>
        </authorList>
    </citation>
    <scope>FUNCTION</scope>
    <scope>SUBCELLULAR LOCATION</scope>
    <scope>INTERACTION WITH SUN1 AND SUN2</scope>
</reference>
<reference key="9">
    <citation type="journal article" date="2020" name="Proc. Natl. Acad. Sci. U.S.A.">
        <title>Isoform-specific regulation of HCN4 channels by a family of endoplasmic reticulum proteins.</title>
        <authorList>
            <person name="Peters C.H."/>
            <person name="Myers M.E."/>
            <person name="Juchno J."/>
            <person name="Haimbaugh C."/>
            <person name="Bichraoui H."/>
            <person name="Du Y."/>
            <person name="Bankston J.R."/>
            <person name="Walker L.A."/>
            <person name="Proenza C."/>
        </authorList>
    </citation>
    <scope>INTERACTION WITH HCN4</scope>
    <scope>FUNCTION</scope>
</reference>
<proteinExistence type="evidence at protein level"/>
<keyword id="KW-0158">Chromosome</keyword>
<keyword id="KW-0175">Coiled coil</keyword>
<keyword id="KW-0963">Cytoplasm</keyword>
<keyword id="KW-0206">Cytoskeleton</keyword>
<keyword id="KW-0256">Endoplasmic reticulum</keyword>
<keyword id="KW-0278">Fertilization</keyword>
<keyword id="KW-0391">Immunity</keyword>
<keyword id="KW-0472">Membrane</keyword>
<keyword id="KW-0539">Nucleus</keyword>
<keyword id="KW-0597">Phosphoprotein</keyword>
<keyword id="KW-1185">Reference proteome</keyword>
<keyword id="KW-0812">Transmembrane</keyword>
<keyword id="KW-1133">Transmembrane helix</keyword>